<sequence>MDIENEQTLNVNPTDPDNLSDSLFSGDEENAGTEEIKNEINGNWISASTINEARINAKAKRRLRKNSSRDSGRGDSVSDNGSEAVRSGVAVPTSPKGRLLDRRSRSGKGRGLPKKGGAGGKGVWGTPGQVYDVEEVDVKDPNYDDDQENCVYETVVLPLDETAFEKTLTPIIQEYFEHGDTNEVAEMLRDLNLGEMKSGVPVLAVSLALEGKASHREMTSKLLSDLCGTVMSTNDVEKSFDKLLKDLPELALDTPRAPQLVGQFIARAVGDGILCNTYIDSYKGTVDCVQARAALDKATVLLSMSKGGKRKDSVWGSGGGQQPVNHLVKEIDMLLKEYLLSGDISEAEHCLKELEVPHFHHELVYEAIVMVLESTGESAFKMILDLLKSLWKSSTITIDQMKRGYERIYNEIPDINLDVPHSYSVLERFVEECFQAGIISKQLRDLCPSRGRKRFVSEGDGGRLKPESY</sequence>
<keyword id="KW-0002">3D-structure</keyword>
<keyword id="KW-0007">Acetylation</keyword>
<keyword id="KW-0053">Apoptosis</keyword>
<keyword id="KW-0963">Cytoplasm</keyword>
<keyword id="KW-0539">Nucleus</keyword>
<keyword id="KW-0597">Phosphoprotein</keyword>
<keyword id="KW-1185">Reference proteome</keyword>
<keyword id="KW-0677">Repeat</keyword>
<keyword id="KW-0694">RNA-binding</keyword>
<keyword id="KW-0043">Tumor suppressor</keyword>
<keyword id="KW-0832">Ubl conjugation</keyword>
<name>PDCD4_MOUSE</name>
<evidence type="ECO:0000250" key="1"/>
<evidence type="ECO:0000250" key="2">
    <source>
        <dbReference type="UniProtKB" id="Q53EL6"/>
    </source>
</evidence>
<evidence type="ECO:0000250" key="3">
    <source>
        <dbReference type="UniProtKB" id="Q9JID1"/>
    </source>
</evidence>
<evidence type="ECO:0000255" key="4"/>
<evidence type="ECO:0000255" key="5">
    <source>
        <dbReference type="PROSITE-ProRule" id="PRU00698"/>
    </source>
</evidence>
<evidence type="ECO:0000256" key="6">
    <source>
        <dbReference type="SAM" id="MobiDB-lite"/>
    </source>
</evidence>
<evidence type="ECO:0000269" key="7">
    <source>
    </source>
</evidence>
<evidence type="ECO:0000269" key="8">
    <source>
    </source>
</evidence>
<evidence type="ECO:0000269" key="9">
    <source>
    </source>
</evidence>
<evidence type="ECO:0000269" key="10">
    <source>
    </source>
</evidence>
<evidence type="ECO:0000269" key="11">
    <source>
    </source>
</evidence>
<evidence type="ECO:0000269" key="12">
    <source>
    </source>
</evidence>
<evidence type="ECO:0000269" key="13">
    <source>
    </source>
</evidence>
<evidence type="ECO:0000305" key="14"/>
<evidence type="ECO:0000305" key="15">
    <source>
    </source>
</evidence>
<evidence type="ECO:0007744" key="16">
    <source>
    </source>
</evidence>
<evidence type="ECO:0007829" key="17">
    <source>
        <dbReference type="PDB" id="2IOL"/>
    </source>
</evidence>
<evidence type="ECO:0007829" key="18">
    <source>
        <dbReference type="PDB" id="2NSZ"/>
    </source>
</evidence>
<evidence type="ECO:0007829" key="19">
    <source>
        <dbReference type="PDB" id="3EIQ"/>
    </source>
</evidence>
<reference key="1">
    <citation type="journal article" date="1995" name="Gene">
        <title>Isolation of a novel mouse gene MA-3 that is induced upon programmed cell death.</title>
        <authorList>
            <person name="Shibahara K."/>
            <person name="Asano M."/>
            <person name="Ishida Y."/>
            <person name="Aoki T."/>
            <person name="Koike T."/>
            <person name="Honjo T."/>
        </authorList>
    </citation>
    <scope>NUCLEOTIDE SEQUENCE [MRNA]</scope>
    <scope>TISSUE SPECIFICITY</scope>
    <source>
        <strain>ICR</strain>
        <tissue>Thymus</tissue>
    </source>
</reference>
<reference key="2">
    <citation type="journal article" date="1996" name="Biochem. Biophys. Res. Commun.">
        <title>Molecular cloning of the genes suppressed in RVC lymphoma cells by topoisomerase inhibitors.</title>
        <authorList>
            <person name="Onishi Y."/>
            <person name="Kizaki H."/>
        </authorList>
    </citation>
    <scope>NUCLEOTIDE SEQUENCE [MRNA]</scope>
    <source>
        <tissue>Lymphoma</tissue>
    </source>
</reference>
<reference key="3">
    <citation type="journal article" date="1998" name="Gene">
        <title>Cloning of the TIS gene suppressed by topoisomerase inhibitors.</title>
        <authorList>
            <person name="Onishi Y."/>
            <person name="Hashimoto S."/>
            <person name="Kizaki H."/>
        </authorList>
    </citation>
    <scope>NUCLEOTIDE SEQUENCE [GENOMIC DNA]</scope>
    <scope>TISSUE SPECIFICITY</scope>
</reference>
<reference key="4">
    <citation type="journal article" date="2006" name="Nat. Genet.">
        <title>Positional cloning of Sorcs1, a type 2 diabetes quantitative trait locus.</title>
        <authorList>
            <person name="Clee S.M."/>
            <person name="Yandell B.S."/>
            <person name="Schueler K.M."/>
            <person name="Rabaglia M.E."/>
            <person name="Richards O.C."/>
            <person name="Raines S.M."/>
            <person name="Kabara E.A."/>
            <person name="Klass D.M."/>
            <person name="Mui E.T.-K."/>
            <person name="Stapleton D.S."/>
            <person name="Gray-Keller M.P."/>
            <person name="Young M.B."/>
            <person name="Stoehr J.P."/>
            <person name="Lan H."/>
            <person name="Boronenkov I."/>
            <person name="Raess P.W."/>
            <person name="Flowers M.T."/>
            <person name="Attie A.D."/>
        </authorList>
    </citation>
    <scope>NUCLEOTIDE SEQUENCE [GENOMIC DNA]</scope>
    <source>
        <strain>BTBR T+ tf/J</strain>
    </source>
</reference>
<reference key="5">
    <citation type="journal article" date="2005" name="Science">
        <title>The transcriptional landscape of the mammalian genome.</title>
        <authorList>
            <person name="Carninci P."/>
            <person name="Kasukawa T."/>
            <person name="Katayama S."/>
            <person name="Gough J."/>
            <person name="Frith M.C."/>
            <person name="Maeda N."/>
            <person name="Oyama R."/>
            <person name="Ravasi T."/>
            <person name="Lenhard B."/>
            <person name="Wells C."/>
            <person name="Kodzius R."/>
            <person name="Shimokawa K."/>
            <person name="Bajic V.B."/>
            <person name="Brenner S.E."/>
            <person name="Batalov S."/>
            <person name="Forrest A.R."/>
            <person name="Zavolan M."/>
            <person name="Davis M.J."/>
            <person name="Wilming L.G."/>
            <person name="Aidinis V."/>
            <person name="Allen J.E."/>
            <person name="Ambesi-Impiombato A."/>
            <person name="Apweiler R."/>
            <person name="Aturaliya R.N."/>
            <person name="Bailey T.L."/>
            <person name="Bansal M."/>
            <person name="Baxter L."/>
            <person name="Beisel K.W."/>
            <person name="Bersano T."/>
            <person name="Bono H."/>
            <person name="Chalk A.M."/>
            <person name="Chiu K.P."/>
            <person name="Choudhary V."/>
            <person name="Christoffels A."/>
            <person name="Clutterbuck D.R."/>
            <person name="Crowe M.L."/>
            <person name="Dalla E."/>
            <person name="Dalrymple B.P."/>
            <person name="de Bono B."/>
            <person name="Della Gatta G."/>
            <person name="di Bernardo D."/>
            <person name="Down T."/>
            <person name="Engstrom P."/>
            <person name="Fagiolini M."/>
            <person name="Faulkner G."/>
            <person name="Fletcher C.F."/>
            <person name="Fukushima T."/>
            <person name="Furuno M."/>
            <person name="Futaki S."/>
            <person name="Gariboldi M."/>
            <person name="Georgii-Hemming P."/>
            <person name="Gingeras T.R."/>
            <person name="Gojobori T."/>
            <person name="Green R.E."/>
            <person name="Gustincich S."/>
            <person name="Harbers M."/>
            <person name="Hayashi Y."/>
            <person name="Hensch T.K."/>
            <person name="Hirokawa N."/>
            <person name="Hill D."/>
            <person name="Huminiecki L."/>
            <person name="Iacono M."/>
            <person name="Ikeo K."/>
            <person name="Iwama A."/>
            <person name="Ishikawa T."/>
            <person name="Jakt M."/>
            <person name="Kanapin A."/>
            <person name="Katoh M."/>
            <person name="Kawasawa Y."/>
            <person name="Kelso J."/>
            <person name="Kitamura H."/>
            <person name="Kitano H."/>
            <person name="Kollias G."/>
            <person name="Krishnan S.P."/>
            <person name="Kruger A."/>
            <person name="Kummerfeld S.K."/>
            <person name="Kurochkin I.V."/>
            <person name="Lareau L.F."/>
            <person name="Lazarevic D."/>
            <person name="Lipovich L."/>
            <person name="Liu J."/>
            <person name="Liuni S."/>
            <person name="McWilliam S."/>
            <person name="Madan Babu M."/>
            <person name="Madera M."/>
            <person name="Marchionni L."/>
            <person name="Matsuda H."/>
            <person name="Matsuzawa S."/>
            <person name="Miki H."/>
            <person name="Mignone F."/>
            <person name="Miyake S."/>
            <person name="Morris K."/>
            <person name="Mottagui-Tabar S."/>
            <person name="Mulder N."/>
            <person name="Nakano N."/>
            <person name="Nakauchi H."/>
            <person name="Ng P."/>
            <person name="Nilsson R."/>
            <person name="Nishiguchi S."/>
            <person name="Nishikawa S."/>
            <person name="Nori F."/>
            <person name="Ohara O."/>
            <person name="Okazaki Y."/>
            <person name="Orlando V."/>
            <person name="Pang K.C."/>
            <person name="Pavan W.J."/>
            <person name="Pavesi G."/>
            <person name="Pesole G."/>
            <person name="Petrovsky N."/>
            <person name="Piazza S."/>
            <person name="Reed J."/>
            <person name="Reid J.F."/>
            <person name="Ring B.Z."/>
            <person name="Ringwald M."/>
            <person name="Rost B."/>
            <person name="Ruan Y."/>
            <person name="Salzberg S.L."/>
            <person name="Sandelin A."/>
            <person name="Schneider C."/>
            <person name="Schoenbach C."/>
            <person name="Sekiguchi K."/>
            <person name="Semple C.A."/>
            <person name="Seno S."/>
            <person name="Sessa L."/>
            <person name="Sheng Y."/>
            <person name="Shibata Y."/>
            <person name="Shimada H."/>
            <person name="Shimada K."/>
            <person name="Silva D."/>
            <person name="Sinclair B."/>
            <person name="Sperling S."/>
            <person name="Stupka E."/>
            <person name="Sugiura K."/>
            <person name="Sultana R."/>
            <person name="Takenaka Y."/>
            <person name="Taki K."/>
            <person name="Tammoja K."/>
            <person name="Tan S.L."/>
            <person name="Tang S."/>
            <person name="Taylor M.S."/>
            <person name="Tegner J."/>
            <person name="Teichmann S.A."/>
            <person name="Ueda H.R."/>
            <person name="van Nimwegen E."/>
            <person name="Verardo R."/>
            <person name="Wei C.L."/>
            <person name="Yagi K."/>
            <person name="Yamanishi H."/>
            <person name="Zabarovsky E."/>
            <person name="Zhu S."/>
            <person name="Zimmer A."/>
            <person name="Hide W."/>
            <person name="Bult C."/>
            <person name="Grimmond S.M."/>
            <person name="Teasdale R.D."/>
            <person name="Liu E.T."/>
            <person name="Brusic V."/>
            <person name="Quackenbush J."/>
            <person name="Wahlestedt C."/>
            <person name="Mattick J.S."/>
            <person name="Hume D.A."/>
            <person name="Kai C."/>
            <person name="Sasaki D."/>
            <person name="Tomaru Y."/>
            <person name="Fukuda S."/>
            <person name="Kanamori-Katayama M."/>
            <person name="Suzuki M."/>
            <person name="Aoki J."/>
            <person name="Arakawa T."/>
            <person name="Iida J."/>
            <person name="Imamura K."/>
            <person name="Itoh M."/>
            <person name="Kato T."/>
            <person name="Kawaji H."/>
            <person name="Kawagashira N."/>
            <person name="Kawashima T."/>
            <person name="Kojima M."/>
            <person name="Kondo S."/>
            <person name="Konno H."/>
            <person name="Nakano K."/>
            <person name="Ninomiya N."/>
            <person name="Nishio T."/>
            <person name="Okada M."/>
            <person name="Plessy C."/>
            <person name="Shibata K."/>
            <person name="Shiraki T."/>
            <person name="Suzuki S."/>
            <person name="Tagami M."/>
            <person name="Waki K."/>
            <person name="Watahiki A."/>
            <person name="Okamura-Oho Y."/>
            <person name="Suzuki H."/>
            <person name="Kawai J."/>
            <person name="Hayashizaki Y."/>
        </authorList>
    </citation>
    <scope>NUCLEOTIDE SEQUENCE [LARGE SCALE MRNA]</scope>
    <source>
        <strain>C57BL/6J</strain>
        <strain>NOD</strain>
        <tissue>Spleen</tissue>
        <tissue>Testis</tissue>
    </source>
</reference>
<reference key="6">
    <citation type="submission" date="2005-07" db="EMBL/GenBank/DDBJ databases">
        <title>Cloning of mouse full open reading frames in Gateway(R) system entry vector (pDONR201).</title>
        <authorList>
            <person name="Ebert L."/>
            <person name="Muenstermann E."/>
            <person name="Schatten R."/>
            <person name="Henze S."/>
            <person name="Bohn E."/>
            <person name="Mollenhauer J."/>
            <person name="Wiemann S."/>
            <person name="Schick M."/>
            <person name="Korn B."/>
        </authorList>
    </citation>
    <scope>NUCLEOTIDE SEQUENCE [LARGE SCALE MRNA]</scope>
</reference>
<reference key="7">
    <citation type="journal article" date="2004" name="Genome Res.">
        <title>The status, quality, and expansion of the NIH full-length cDNA project: the Mammalian Gene Collection (MGC).</title>
        <authorList>
            <consortium name="The MGC Project Team"/>
        </authorList>
    </citation>
    <scope>NUCLEOTIDE SEQUENCE [LARGE SCALE MRNA]</scope>
    <source>
        <strain>C57BL/6J</strain>
        <tissue>Brain</tissue>
    </source>
</reference>
<reference key="8">
    <citation type="journal article" date="2003" name="Mol. Cell. Biol.">
        <title>The transformation suppressor Pdcd4 is a novel eukaryotic translation initiation factor 4A binding protein that inhibits translation.</title>
        <authorList>
            <person name="Yang H.-S."/>
            <person name="Jansen A.P."/>
            <person name="Komar A.A."/>
            <person name="Zheng X."/>
            <person name="Merrick W.C."/>
            <person name="Costes S."/>
            <person name="Lockett S.J."/>
            <person name="Sonenberg N."/>
            <person name="Colburn N.H."/>
        </authorList>
    </citation>
    <scope>FUNCTION</scope>
    <scope>SUBCELLULAR LOCATION</scope>
    <scope>INTERACTION WITH EIF4A1 AND EIF4A2</scope>
</reference>
<reference key="9">
    <citation type="journal article" date="2003" name="Oncogene">
        <title>The transformation suppressor protein Pdcd4 shuttles between nucleus and cytoplasm and binds RNA.</title>
        <authorList>
            <person name="Boehm M."/>
            <person name="Sawicka K."/>
            <person name="Siebrasse J.P."/>
            <person name="Brehmer-Fastnacht A."/>
            <person name="Peters R."/>
            <person name="Klempnauer K.-H."/>
        </authorList>
    </citation>
    <scope>FUNCTION</scope>
    <scope>SUBCELLULAR LOCATION</scope>
</reference>
<reference key="10">
    <citation type="journal article" date="2005" name="Cancer Res.">
        <title>Epidermal expression of the translation inhibitor programmed cell death 4 suppresses tumorigenesis.</title>
        <authorList>
            <person name="Jansen A.P."/>
            <person name="Camalier C.E."/>
            <person name="Colburn N.H."/>
        </authorList>
    </citation>
    <scope>FUNCTION</scope>
</reference>
<reference key="11">
    <citation type="journal article" date="2010" name="Cell">
        <title>A tissue-specific atlas of mouse protein phosphorylation and expression.</title>
        <authorList>
            <person name="Huttlin E.L."/>
            <person name="Jedrychowski M.P."/>
            <person name="Elias J.E."/>
            <person name="Goswami T."/>
            <person name="Rad R."/>
            <person name="Beausoleil S.A."/>
            <person name="Villen J."/>
            <person name="Haas W."/>
            <person name="Sowa M.E."/>
            <person name="Gygi S.P."/>
        </authorList>
    </citation>
    <scope>PHOSPHORYLATION [LARGE SCALE ANALYSIS] AT SER-76 AND SER-313</scope>
    <scope>IDENTIFICATION BY MASS SPECTROMETRY [LARGE SCALE ANALYSIS]</scope>
    <source>
        <tissue>Liver</tissue>
        <tissue>Lung</tissue>
        <tissue>Pancreas</tissue>
        <tissue>Spleen</tissue>
        <tissue>Testis</tissue>
    </source>
</reference>
<reference key="12">
    <citation type="journal article" date="2007" name="Mol. Cell. Biol.">
        <title>Structural basis for inhibition of translation by the tumor suppressor pdcd4.</title>
        <authorList>
            <person name="Laronde-Leblanc N."/>
            <person name="Santhanam A.N."/>
            <person name="Baker A.R."/>
            <person name="Wlodawer A."/>
            <person name="Colburn N.H."/>
        </authorList>
    </citation>
    <scope>X-RAY CRYSTALLOGRAPHY (1.15 ANGSTROMS) OF 320-469</scope>
    <scope>FUNCTION</scope>
    <scope>INTERACTION WITH EIF4A AND EIF4G</scope>
    <scope>SUBUNIT</scope>
    <scope>MUTAGENESIS OF ASP-414; ASP-418 AND SER-457</scope>
</reference>
<reference key="13">
    <citation type="journal article" date="2007" name="Oncogene">
        <title>Structure of the C-terminal MA-3 domain of the tumour suppressor protein Pdcd4 and characterization of its interaction with eIF4A.</title>
        <authorList>
            <person name="Waters L.C."/>
            <person name="Veverka V."/>
            <person name="Bohm M."/>
            <person name="Schmedt T."/>
            <person name="Choong P.T."/>
            <person name="Muskett F.W."/>
            <person name="Klempnauer K.H."/>
            <person name="Carr M.D."/>
        </authorList>
    </citation>
    <scope>STRUCTURE BY NMR OF 319-449</scope>
    <scope>INTERACTION WITH EIF4A1</scope>
</reference>
<reference key="14">
    <citation type="journal article" date="2009" name="EMBO J.">
        <title>Structural basis for translational inhibition by the tumour suppressor Pdcd4.</title>
        <authorList>
            <person name="Loh P.G."/>
            <person name="Yang H.S."/>
            <person name="Walsh M.A."/>
            <person name="Wang Q."/>
            <person name="Wang X."/>
            <person name="Cheng Z."/>
            <person name="Liu D."/>
            <person name="Song H."/>
        </authorList>
    </citation>
    <scope>X-RAY CRYSTALLOGRAPHY (3.5 ANGSTROMS) OF 120-469 IN COMPLEX WITH EIF4A1</scope>
    <scope>SUBUNIT</scope>
    <scope>DOMAIN</scope>
</reference>
<proteinExistence type="evidence at protein level"/>
<dbReference type="EMBL" id="D50465">
    <property type="protein sequence ID" value="BAA09056.1"/>
    <property type="molecule type" value="mRNA"/>
</dbReference>
<dbReference type="EMBL" id="D86344">
    <property type="protein sequence ID" value="BAA13072.1"/>
    <property type="molecule type" value="mRNA"/>
</dbReference>
<dbReference type="EMBL" id="AB010139">
    <property type="protein sequence ID" value="BAA32356.1"/>
    <property type="molecule type" value="Genomic_DNA"/>
</dbReference>
<dbReference type="EMBL" id="DQ479921">
    <property type="protein sequence ID" value="ABF51670.1"/>
    <property type="molecule type" value="Genomic_DNA"/>
</dbReference>
<dbReference type="EMBL" id="CT010188">
    <property type="protein sequence ID" value="CAJ18396.1"/>
    <property type="molecule type" value="mRNA"/>
</dbReference>
<dbReference type="EMBL" id="AK134366">
    <property type="protein sequence ID" value="BAE22118.1"/>
    <property type="molecule type" value="mRNA"/>
</dbReference>
<dbReference type="EMBL" id="AK172654">
    <property type="protein sequence ID" value="BAE43115.1"/>
    <property type="molecule type" value="mRNA"/>
</dbReference>
<dbReference type="EMBL" id="BC055739">
    <property type="protein sequence ID" value="AAH55739.1"/>
    <property type="molecule type" value="mRNA"/>
</dbReference>
<dbReference type="CCDS" id="CCDS29903.1"/>
<dbReference type="PIR" id="JC4523">
    <property type="entry name" value="JC4523"/>
</dbReference>
<dbReference type="RefSeq" id="NP_001161963.1">
    <property type="nucleotide sequence ID" value="NM_001168491.1"/>
</dbReference>
<dbReference type="RefSeq" id="NP_001161964.1">
    <property type="nucleotide sequence ID" value="NM_001168492.1"/>
</dbReference>
<dbReference type="RefSeq" id="NP_035180.2">
    <property type="nucleotide sequence ID" value="NM_011050.4"/>
</dbReference>
<dbReference type="RefSeq" id="XP_006526825.1">
    <property type="nucleotide sequence ID" value="XM_006526762.5"/>
</dbReference>
<dbReference type="RefSeq" id="XP_030106628.1">
    <property type="nucleotide sequence ID" value="XM_030250768.2"/>
</dbReference>
<dbReference type="RefSeq" id="XP_030106629.1">
    <property type="nucleotide sequence ID" value="XM_030250769.1"/>
</dbReference>
<dbReference type="RefSeq" id="XP_036017352.1">
    <property type="nucleotide sequence ID" value="XM_036161459.1"/>
</dbReference>
<dbReference type="RefSeq" id="XP_036017353.1">
    <property type="nucleotide sequence ID" value="XM_036161460.1"/>
</dbReference>
<dbReference type="RefSeq" id="XP_036017354.1">
    <property type="nucleotide sequence ID" value="XM_036161461.1"/>
</dbReference>
<dbReference type="PDB" id="2HM8">
    <property type="method" value="NMR"/>
    <property type="chains" value="A=319-449"/>
</dbReference>
<dbReference type="PDB" id="2IOL">
    <property type="method" value="X-ray"/>
    <property type="resolution" value="2.00 A"/>
    <property type="chains" value="A/B=320-469"/>
</dbReference>
<dbReference type="PDB" id="2ION">
    <property type="method" value="X-ray"/>
    <property type="resolution" value="1.57 A"/>
    <property type="chains" value="A=320-467"/>
</dbReference>
<dbReference type="PDB" id="2IOS">
    <property type="method" value="X-ray"/>
    <property type="resolution" value="1.76 A"/>
    <property type="chains" value="A=320-469"/>
</dbReference>
<dbReference type="PDB" id="2KZT">
    <property type="method" value="NMR"/>
    <property type="chains" value="B=319-449"/>
</dbReference>
<dbReference type="PDB" id="2NSZ">
    <property type="method" value="X-ray"/>
    <property type="resolution" value="1.15 A"/>
    <property type="chains" value="A=322-450"/>
</dbReference>
<dbReference type="PDB" id="3EIQ">
    <property type="method" value="X-ray"/>
    <property type="resolution" value="3.50 A"/>
    <property type="chains" value="C=120-469"/>
</dbReference>
<dbReference type="PDBsum" id="2HM8"/>
<dbReference type="PDBsum" id="2IOL"/>
<dbReference type="PDBsum" id="2ION"/>
<dbReference type="PDBsum" id="2IOS"/>
<dbReference type="PDBsum" id="2KZT"/>
<dbReference type="PDBsum" id="2NSZ"/>
<dbReference type="PDBsum" id="3EIQ"/>
<dbReference type="BMRB" id="Q61823"/>
<dbReference type="SMR" id="Q61823"/>
<dbReference type="BioGRID" id="202070">
    <property type="interactions" value="4"/>
</dbReference>
<dbReference type="FunCoup" id="Q61823">
    <property type="interactions" value="4602"/>
</dbReference>
<dbReference type="IntAct" id="Q61823">
    <property type="interactions" value="7"/>
</dbReference>
<dbReference type="MINT" id="Q61823"/>
<dbReference type="STRING" id="10090.ENSMUSP00000073975"/>
<dbReference type="GlyGen" id="Q61823">
    <property type="glycosylation" value="1 site"/>
</dbReference>
<dbReference type="iPTMnet" id="Q61823"/>
<dbReference type="PhosphoSitePlus" id="Q61823"/>
<dbReference type="SwissPalm" id="Q61823"/>
<dbReference type="jPOST" id="Q61823"/>
<dbReference type="PaxDb" id="10090-ENSMUSP00000073975"/>
<dbReference type="PeptideAtlas" id="Q61823"/>
<dbReference type="ProteomicsDB" id="287901"/>
<dbReference type="Pumba" id="Q61823"/>
<dbReference type="Antibodypedia" id="616">
    <property type="antibodies" value="842 antibodies from 42 providers"/>
</dbReference>
<dbReference type="DNASU" id="18569"/>
<dbReference type="Ensembl" id="ENSMUST00000025931.14">
    <property type="protein sequence ID" value="ENSMUSP00000025931.7"/>
    <property type="gene ID" value="ENSMUSG00000024975.14"/>
</dbReference>
<dbReference type="Ensembl" id="ENSMUST00000074371.13">
    <property type="protein sequence ID" value="ENSMUSP00000073975.6"/>
    <property type="gene ID" value="ENSMUSG00000024975.14"/>
</dbReference>
<dbReference type="Ensembl" id="ENSMUST00000165617.3">
    <property type="protein sequence ID" value="ENSMUSP00000133135.2"/>
    <property type="gene ID" value="ENSMUSG00000024975.14"/>
</dbReference>
<dbReference type="GeneID" id="18569"/>
<dbReference type="KEGG" id="mmu:18569"/>
<dbReference type="UCSC" id="uc008hxb.2">
    <property type="organism name" value="mouse"/>
</dbReference>
<dbReference type="AGR" id="MGI:107490"/>
<dbReference type="CTD" id="27250"/>
<dbReference type="MGI" id="MGI:107490">
    <property type="gene designation" value="Pdcd4"/>
</dbReference>
<dbReference type="VEuPathDB" id="HostDB:ENSMUSG00000024975"/>
<dbReference type="eggNOG" id="KOG0403">
    <property type="taxonomic scope" value="Eukaryota"/>
</dbReference>
<dbReference type="GeneTree" id="ENSGT00390000015948"/>
<dbReference type="HOGENOM" id="CLU_025354_1_0_1"/>
<dbReference type="InParanoid" id="Q61823"/>
<dbReference type="OMA" id="TRTHPQY"/>
<dbReference type="OrthoDB" id="414546at2759"/>
<dbReference type="PhylomeDB" id="Q61823"/>
<dbReference type="TreeFam" id="TF323207"/>
<dbReference type="BioGRID-ORCS" id="18569">
    <property type="hits" value="0 hits in 78 CRISPR screens"/>
</dbReference>
<dbReference type="ChiTaRS" id="Pdcd4">
    <property type="organism name" value="mouse"/>
</dbReference>
<dbReference type="EvolutionaryTrace" id="Q61823"/>
<dbReference type="PRO" id="PR:Q61823"/>
<dbReference type="Proteomes" id="UP000000589">
    <property type="component" value="Chromosome 19"/>
</dbReference>
<dbReference type="RNAct" id="Q61823">
    <property type="molecule type" value="protein"/>
</dbReference>
<dbReference type="Bgee" id="ENSMUSG00000024975">
    <property type="expression patterns" value="Expressed in lacrimal gland and 279 other cell types or tissues"/>
</dbReference>
<dbReference type="ExpressionAtlas" id="Q61823">
    <property type="expression patterns" value="baseline and differential"/>
</dbReference>
<dbReference type="GO" id="GO:0005737">
    <property type="term" value="C:cytoplasm"/>
    <property type="evidence" value="ECO:0000250"/>
    <property type="project" value="UniProtKB"/>
</dbReference>
<dbReference type="GO" id="GO:0005829">
    <property type="term" value="C:cytosol"/>
    <property type="evidence" value="ECO:0000250"/>
    <property type="project" value="UniProtKB"/>
</dbReference>
<dbReference type="GO" id="GO:0005634">
    <property type="term" value="C:nucleus"/>
    <property type="evidence" value="ECO:0000250"/>
    <property type="project" value="UniProtKB"/>
</dbReference>
<dbReference type="GO" id="GO:0003723">
    <property type="term" value="F:RNA binding"/>
    <property type="evidence" value="ECO:0007669"/>
    <property type="project" value="UniProtKB-KW"/>
</dbReference>
<dbReference type="GO" id="GO:0006915">
    <property type="term" value="P:apoptotic process"/>
    <property type="evidence" value="ECO:0007669"/>
    <property type="project" value="UniProtKB-KW"/>
</dbReference>
<dbReference type="GO" id="GO:0030509">
    <property type="term" value="P:BMP signaling pathway"/>
    <property type="evidence" value="ECO:0007669"/>
    <property type="project" value="Ensembl"/>
</dbReference>
<dbReference type="GO" id="GO:0071222">
    <property type="term" value="P:cellular response to lipopolysaccharide"/>
    <property type="evidence" value="ECO:0000315"/>
    <property type="project" value="BHF-UCL"/>
</dbReference>
<dbReference type="GO" id="GO:1900016">
    <property type="term" value="P:negative regulation of cytokine production involved in inflammatory response"/>
    <property type="evidence" value="ECO:0000315"/>
    <property type="project" value="BHF-UCL"/>
</dbReference>
<dbReference type="GO" id="GO:0045892">
    <property type="term" value="P:negative regulation of DNA-templated transcription"/>
    <property type="evidence" value="ECO:0000250"/>
    <property type="project" value="UniProtKB"/>
</dbReference>
<dbReference type="GO" id="GO:0043508">
    <property type="term" value="P:negative regulation of JUN kinase activity"/>
    <property type="evidence" value="ECO:0000250"/>
    <property type="project" value="UniProtKB"/>
</dbReference>
<dbReference type="GO" id="GO:1904761">
    <property type="term" value="P:negative regulation of myofibroblast differentiation"/>
    <property type="evidence" value="ECO:0007669"/>
    <property type="project" value="Ensembl"/>
</dbReference>
<dbReference type="GO" id="GO:1905064">
    <property type="term" value="P:negative regulation of vascular associated smooth muscle cell differentiation"/>
    <property type="evidence" value="ECO:0007669"/>
    <property type="project" value="Ensembl"/>
</dbReference>
<dbReference type="GO" id="GO:1904706">
    <property type="term" value="P:negative regulation of vascular associated smooth muscle cell proliferation"/>
    <property type="evidence" value="ECO:0007669"/>
    <property type="project" value="Ensembl"/>
</dbReference>
<dbReference type="GO" id="GO:2000353">
    <property type="term" value="P:positive regulation of endothelial cell apoptotic process"/>
    <property type="evidence" value="ECO:0007669"/>
    <property type="project" value="Ensembl"/>
</dbReference>
<dbReference type="GO" id="GO:0050729">
    <property type="term" value="P:positive regulation of inflammatory response"/>
    <property type="evidence" value="ECO:0000315"/>
    <property type="project" value="BHF-UCL"/>
</dbReference>
<dbReference type="GO" id="GO:1901224">
    <property type="term" value="P:positive regulation of non-canonical NF-kappaB signal transduction"/>
    <property type="evidence" value="ECO:0007669"/>
    <property type="project" value="Ensembl"/>
</dbReference>
<dbReference type="GO" id="GO:1905461">
    <property type="term" value="P:positive regulation of vascular associated smooth muscle cell apoptotic process"/>
    <property type="evidence" value="ECO:0007669"/>
    <property type="project" value="Ensembl"/>
</dbReference>
<dbReference type="FunFam" id="1.25.40.180:FF:000008">
    <property type="entry name" value="Programmed cell death protein 4"/>
    <property type="match status" value="1"/>
</dbReference>
<dbReference type="FunFam" id="1.25.40.180:FF:000009">
    <property type="entry name" value="programmed cell death protein 4"/>
    <property type="match status" value="1"/>
</dbReference>
<dbReference type="Gene3D" id="1.25.40.180">
    <property type="match status" value="2"/>
</dbReference>
<dbReference type="IDEAL" id="IID50333"/>
<dbReference type="InterPro" id="IPR016024">
    <property type="entry name" value="ARM-type_fold"/>
</dbReference>
<dbReference type="InterPro" id="IPR003891">
    <property type="entry name" value="Initiation_fac_eIF4g_MI"/>
</dbReference>
<dbReference type="InterPro" id="IPR039778">
    <property type="entry name" value="PDCD4"/>
</dbReference>
<dbReference type="PANTHER" id="PTHR12626">
    <property type="entry name" value="PROGRAMMED CELL DEATH 4"/>
    <property type="match status" value="1"/>
</dbReference>
<dbReference type="PANTHER" id="PTHR12626:SF3">
    <property type="entry name" value="PROGRAMMED CELL DEATH PROTEIN 4"/>
    <property type="match status" value="1"/>
</dbReference>
<dbReference type="Pfam" id="PF02847">
    <property type="entry name" value="MA3"/>
    <property type="match status" value="2"/>
</dbReference>
<dbReference type="SMART" id="SM00544">
    <property type="entry name" value="MA3"/>
    <property type="match status" value="2"/>
</dbReference>
<dbReference type="SUPFAM" id="SSF48371">
    <property type="entry name" value="ARM repeat"/>
    <property type="match status" value="2"/>
</dbReference>
<dbReference type="PROSITE" id="PS51366">
    <property type="entry name" value="MI"/>
    <property type="match status" value="2"/>
</dbReference>
<comment type="function">
    <text evidence="7 8 9 10">Inhibits translation initiation and cap-dependent translation. May excert its function by hindering the interaction between EIF4A1 and EIF4G. Inhibits the helicase activity of EIF4A. Modulates the activation of JUN kinase. Down-regulates the expression of MAP4K1, thus inhibiting events important in driving invasion, namely, MAPK85 activation and consequent JUN-dependent transcription. May play a role in apoptosis. Tumor suppressor. Inhibits tumor promoter-induced neoplastic transformation. Binds RNA.</text>
</comment>
<comment type="subunit">
    <text evidence="1">Interacts (via MI domains) with EIF4A1 and EIF4A2 (via N-terminal domain). Heterotrimer with EIF4A1; one molecule of PDCD4 binds two molecules of EIF4A1. Interacts with EIF4G1. May form a complex with EIF4A1 and EIF4G1. The interaction between PDCD4 and EIF4A1 interferes with the interaction between EIF4A1 and EIF4G. When phosphorylated, interacts with BTRC and FBXW11 (By similarity).</text>
</comment>
<comment type="interaction">
    <interactant intactId="EBI-296473">
        <id>Q61823</id>
    </interactant>
    <interactant intactId="EBI-6665935">
        <id>P60843</id>
        <label>Eif4a1</label>
    </interactant>
    <organismsDiffer>false</organismsDiffer>
    <experiments>4</experiments>
</comment>
<comment type="interaction">
    <interactant intactId="EBI-296473">
        <id>Q61823</id>
    </interactant>
    <interactant intactId="EBI-296494">
        <id>Q62448</id>
        <label>Eif4g2</label>
    </interactant>
    <organismsDiffer>false</organismsDiffer>
    <experiments>2</experiments>
</comment>
<comment type="subcellular location">
    <subcellularLocation>
        <location evidence="8">Nucleus</location>
    </subcellularLocation>
    <subcellularLocation>
        <location evidence="8">Cytoplasm</location>
    </subcellularLocation>
    <text evidence="2 8">Shuttles between the nucleus and cytoplasm (PubMed:12894233). Predominantly nuclear under normal growth conditions, and when phosphorylated at Ser-457 (By similarity).</text>
</comment>
<comment type="tissue specificity">
    <text evidence="12 13">Expressed ubiquitously. Highyly expressed in thymus and liver. Moderately expressed in brain, kidney and spleen; weakly in lung and heart. Expression is up- or down-regulated in response to apoptosis inducers. Regulated by many programmed cell death-inducing stimuli.</text>
</comment>
<comment type="domain">
    <text evidence="11">Binds EIF4A1 via both MI domains.</text>
</comment>
<comment type="PTM">
    <text evidence="1">Polyubiquitinated, leading to its proteasomal degradation. Rapidly degraded in response to mitogens. Phosphorylation of the phosphodegron promotes interaction with BTRC and proteasomal degradation (By similarity).</text>
</comment>
<comment type="PTM">
    <text evidence="1">Phosphorylated at Ser-67 by RPS6KB1 in response to mitogens; phosphorylation promotes proteasomal degradation of PDCD4.</text>
</comment>
<comment type="disease">
    <text evidence="15">Decreases benign tumor development and malignant progression.</text>
</comment>
<comment type="similarity">
    <text evidence="14">Belongs to the PDCD4 family.</text>
</comment>
<organism>
    <name type="scientific">Mus musculus</name>
    <name type="common">Mouse</name>
    <dbReference type="NCBI Taxonomy" id="10090"/>
    <lineage>
        <taxon>Eukaryota</taxon>
        <taxon>Metazoa</taxon>
        <taxon>Chordata</taxon>
        <taxon>Craniata</taxon>
        <taxon>Vertebrata</taxon>
        <taxon>Euteleostomi</taxon>
        <taxon>Mammalia</taxon>
        <taxon>Eutheria</taxon>
        <taxon>Euarchontoglires</taxon>
        <taxon>Glires</taxon>
        <taxon>Rodentia</taxon>
        <taxon>Myomorpha</taxon>
        <taxon>Muroidea</taxon>
        <taxon>Muridae</taxon>
        <taxon>Murinae</taxon>
        <taxon>Mus</taxon>
        <taxon>Mus</taxon>
    </lineage>
</organism>
<accession>Q61823</accession>
<accession>P97296</accession>
<accession>Q3T9A9</accession>
<feature type="chain" id="PRO_0000256520" description="Programmed cell death protein 4">
    <location>
        <begin position="1"/>
        <end position="469"/>
    </location>
</feature>
<feature type="domain" description="MI 1" evidence="5">
    <location>
        <begin position="163"/>
        <end position="284"/>
    </location>
</feature>
<feature type="domain" description="MI 2" evidence="5">
    <location>
        <begin position="326"/>
        <end position="449"/>
    </location>
</feature>
<feature type="region of interest" description="Disordered" evidence="6">
    <location>
        <begin position="1"/>
        <end position="37"/>
    </location>
</feature>
<feature type="region of interest" description="Disordered" evidence="6">
    <location>
        <begin position="58"/>
        <end position="128"/>
    </location>
</feature>
<feature type="short sequence motif" description="Nuclear localization signal" evidence="4">
    <location>
        <begin position="58"/>
        <end position="64"/>
    </location>
</feature>
<feature type="short sequence motif" description="Phosphodegron" evidence="1">
    <location>
        <begin position="70"/>
        <end position="76"/>
    </location>
</feature>
<feature type="short sequence motif" description="Nuclear localization signal" evidence="4">
    <location>
        <begin position="448"/>
        <end position="454"/>
    </location>
</feature>
<feature type="compositionally biased region" description="Polar residues" evidence="6">
    <location>
        <begin position="1"/>
        <end position="23"/>
    </location>
</feature>
<feature type="compositionally biased region" description="Gly residues" evidence="6">
    <location>
        <begin position="114"/>
        <end position="125"/>
    </location>
</feature>
<feature type="modified residue" description="N-acetylmethionine" evidence="2">
    <location>
        <position position="1"/>
    </location>
</feature>
<feature type="modified residue" description="Phosphoserine" evidence="3">
    <location>
        <position position="25"/>
    </location>
</feature>
<feature type="modified residue" description="Phosphoserine; by PKB and RPS6KB1" evidence="2">
    <location>
        <position position="67"/>
    </location>
</feature>
<feature type="modified residue" description="Phosphoserine" evidence="2">
    <location>
        <position position="68"/>
    </location>
</feature>
<feature type="modified residue" description="Phosphoserine" evidence="2">
    <location>
        <position position="71"/>
    </location>
</feature>
<feature type="modified residue" description="Phosphoserine" evidence="16">
    <location>
        <position position="76"/>
    </location>
</feature>
<feature type="modified residue" description="Phosphoserine" evidence="2">
    <location>
        <position position="78"/>
    </location>
</feature>
<feature type="modified residue" description="Phosphoserine" evidence="2">
    <location>
        <position position="94"/>
    </location>
</feature>
<feature type="modified residue" description="Phosphotyrosine" evidence="2">
    <location>
        <position position="152"/>
    </location>
</feature>
<feature type="modified residue" description="Phosphoserine" evidence="16">
    <location>
        <position position="313"/>
    </location>
</feature>
<feature type="modified residue" description="Phosphoserine" evidence="2">
    <location>
        <position position="317"/>
    </location>
</feature>
<feature type="modified residue" description="Phosphoserine; by PKB" evidence="2">
    <location>
        <position position="457"/>
    </location>
</feature>
<feature type="mutagenesis site" description="Strongly reduced interaction with EIF4A1." evidence="10">
    <original>D</original>
    <variation>A</variation>
    <location>
        <position position="414"/>
    </location>
</feature>
<feature type="mutagenesis site" description="Strongly reduced interaction with EIF4A1." evidence="10">
    <original>D</original>
    <variation>A</variation>
    <location>
        <position position="418"/>
    </location>
</feature>
<feature type="mutagenesis site" description="No effect on interaction with EIF4A1." evidence="10">
    <original>S</original>
    <variation>A</variation>
    <variation>D</variation>
    <location>
        <position position="457"/>
    </location>
</feature>
<feature type="sequence conflict" description="In Ref. 2; BAA32356 and 3; BAA13072." evidence="14" ref="2 3">
    <original>S</original>
    <variation>I</variation>
    <location>
        <position position="232"/>
    </location>
</feature>
<feature type="sequence conflict" description="In Ref. 2; BAA32356 and 3; BAA13072." evidence="14" ref="2 3">
    <original>V</original>
    <variation>I</variation>
    <location>
        <position position="369"/>
    </location>
</feature>
<feature type="sequence conflict" description="In Ref. 5; BAE43115." evidence="14" ref="5">
    <original>D</original>
    <variation>G</variation>
    <location>
        <position position="414"/>
    </location>
</feature>
<feature type="helix" evidence="19">
    <location>
        <begin position="162"/>
        <end position="178"/>
    </location>
</feature>
<feature type="helix" evidence="19">
    <location>
        <begin position="181"/>
        <end position="189"/>
    </location>
</feature>
<feature type="turn" evidence="19">
    <location>
        <begin position="190"/>
        <end position="192"/>
    </location>
</feature>
<feature type="helix" evidence="19">
    <location>
        <begin position="195"/>
        <end position="199"/>
    </location>
</feature>
<feature type="helix" evidence="19">
    <location>
        <begin position="200"/>
        <end position="208"/>
    </location>
</feature>
<feature type="helix" evidence="19">
    <location>
        <begin position="213"/>
        <end position="224"/>
    </location>
</feature>
<feature type="turn" evidence="19">
    <location>
        <begin position="225"/>
        <end position="229"/>
    </location>
</feature>
<feature type="helix" evidence="19">
    <location>
        <begin position="233"/>
        <end position="245"/>
    </location>
</feature>
<feature type="helix" evidence="19">
    <location>
        <begin position="247"/>
        <end position="253"/>
    </location>
</feature>
<feature type="helix" evidence="19">
    <location>
        <begin position="257"/>
        <end position="270"/>
    </location>
</feature>
<feature type="helix" evidence="19">
    <location>
        <begin position="280"/>
        <end position="282"/>
    </location>
</feature>
<feature type="helix" evidence="19">
    <location>
        <begin position="289"/>
        <end position="302"/>
    </location>
</feature>
<feature type="strand" evidence="19">
    <location>
        <begin position="320"/>
        <end position="322"/>
    </location>
</feature>
<feature type="helix" evidence="18">
    <location>
        <begin position="326"/>
        <end position="341"/>
    </location>
</feature>
<feature type="helix" evidence="18">
    <location>
        <begin position="344"/>
        <end position="354"/>
    </location>
</feature>
<feature type="helix" evidence="18">
    <location>
        <begin position="357"/>
        <end position="359"/>
    </location>
</feature>
<feature type="helix" evidence="18">
    <location>
        <begin position="360"/>
        <end position="373"/>
    </location>
</feature>
<feature type="strand" evidence="17">
    <location>
        <begin position="374"/>
        <end position="377"/>
    </location>
</feature>
<feature type="helix" evidence="18">
    <location>
        <begin position="378"/>
        <end position="392"/>
    </location>
</feature>
<feature type="helix" evidence="18">
    <location>
        <begin position="398"/>
        <end position="418"/>
    </location>
</feature>
<feature type="helix" evidence="18">
    <location>
        <begin position="422"/>
        <end position="435"/>
    </location>
</feature>
<feature type="helix" evidence="18">
    <location>
        <begin position="441"/>
        <end position="445"/>
    </location>
</feature>
<protein>
    <recommendedName>
        <fullName>Programmed cell death protein 4</fullName>
    </recommendedName>
    <alternativeName>
        <fullName>Protein MA-3</fullName>
    </alternativeName>
    <alternativeName>
        <fullName>Topoisomerase-inhibitor suppressed protein</fullName>
    </alternativeName>
</protein>
<gene>
    <name type="primary">Pdcd4</name>
    <name type="synonym">Ma3</name>
    <name type="synonym">Tis</name>
</gene>